<keyword id="KW-0067">ATP-binding</keyword>
<keyword id="KW-0143">Chaperone</keyword>
<keyword id="KW-0963">Cytoplasm</keyword>
<keyword id="KW-0413">Isomerase</keyword>
<keyword id="KW-0547">Nucleotide-binding</keyword>
<gene>
    <name evidence="1" type="primary">groEL</name>
    <name evidence="1" type="synonym">groL</name>
    <name type="synonym">mopA</name>
</gene>
<comment type="function">
    <text evidence="1">Together with its co-chaperonin GroES, plays an essential role in assisting protein folding. The GroEL-GroES system forms a nano-cage that allows encapsulation of the non-native substrate proteins and provides a physical environment optimized to promote and accelerate protein folding.</text>
</comment>
<comment type="catalytic activity">
    <reaction evidence="1">
        <text>ATP + H2O + a folded polypeptide = ADP + phosphate + an unfolded polypeptide.</text>
        <dbReference type="EC" id="5.6.1.7"/>
    </reaction>
</comment>
<comment type="subunit">
    <text evidence="1">Forms a cylinder of 14 subunits composed of two heptameric rings stacked back-to-back. Interacts with the co-chaperonin GroES.</text>
</comment>
<comment type="subcellular location">
    <subcellularLocation>
        <location evidence="1">Cytoplasm</location>
    </subcellularLocation>
</comment>
<comment type="similarity">
    <text evidence="1">Belongs to the chaperonin (HSP60) family.</text>
</comment>
<dbReference type="EC" id="5.6.1.7" evidence="1"/>
<dbReference type="EMBL" id="AB008143">
    <property type="protein sequence ID" value="BAA25219.1"/>
    <property type="molecule type" value="Genomic_DNA"/>
</dbReference>
<dbReference type="SMR" id="O66202"/>
<dbReference type="STRING" id="61652.AXX16_0220"/>
<dbReference type="GO" id="GO:0005737">
    <property type="term" value="C:cytoplasm"/>
    <property type="evidence" value="ECO:0007669"/>
    <property type="project" value="UniProtKB-SubCell"/>
</dbReference>
<dbReference type="GO" id="GO:0005524">
    <property type="term" value="F:ATP binding"/>
    <property type="evidence" value="ECO:0007669"/>
    <property type="project" value="UniProtKB-KW"/>
</dbReference>
<dbReference type="GO" id="GO:0140662">
    <property type="term" value="F:ATP-dependent protein folding chaperone"/>
    <property type="evidence" value="ECO:0007669"/>
    <property type="project" value="InterPro"/>
</dbReference>
<dbReference type="GO" id="GO:0016853">
    <property type="term" value="F:isomerase activity"/>
    <property type="evidence" value="ECO:0007669"/>
    <property type="project" value="UniProtKB-KW"/>
</dbReference>
<dbReference type="GO" id="GO:0042026">
    <property type="term" value="P:protein refolding"/>
    <property type="evidence" value="ECO:0007669"/>
    <property type="project" value="InterPro"/>
</dbReference>
<dbReference type="CDD" id="cd03344">
    <property type="entry name" value="GroEL"/>
    <property type="match status" value="1"/>
</dbReference>
<dbReference type="FunFam" id="1.10.560.10:FF:000001">
    <property type="entry name" value="60 kDa chaperonin"/>
    <property type="match status" value="1"/>
</dbReference>
<dbReference type="FunFam" id="3.50.7.10:FF:000001">
    <property type="entry name" value="60 kDa chaperonin"/>
    <property type="match status" value="1"/>
</dbReference>
<dbReference type="Gene3D" id="3.50.7.10">
    <property type="entry name" value="GroEL"/>
    <property type="match status" value="1"/>
</dbReference>
<dbReference type="Gene3D" id="1.10.560.10">
    <property type="entry name" value="GroEL-like equatorial domain"/>
    <property type="match status" value="1"/>
</dbReference>
<dbReference type="Gene3D" id="3.30.260.10">
    <property type="entry name" value="TCP-1-like chaperonin intermediate domain"/>
    <property type="match status" value="1"/>
</dbReference>
<dbReference type="HAMAP" id="MF_00600">
    <property type="entry name" value="CH60"/>
    <property type="match status" value="1"/>
</dbReference>
<dbReference type="InterPro" id="IPR018370">
    <property type="entry name" value="Chaperonin_Cpn60_CS"/>
</dbReference>
<dbReference type="InterPro" id="IPR001844">
    <property type="entry name" value="Cpn60/GroEL"/>
</dbReference>
<dbReference type="InterPro" id="IPR002423">
    <property type="entry name" value="Cpn60/GroEL/TCP-1"/>
</dbReference>
<dbReference type="InterPro" id="IPR027409">
    <property type="entry name" value="GroEL-like_apical_dom_sf"/>
</dbReference>
<dbReference type="InterPro" id="IPR027413">
    <property type="entry name" value="GROEL-like_equatorial_sf"/>
</dbReference>
<dbReference type="InterPro" id="IPR027410">
    <property type="entry name" value="TCP-1-like_intermed_sf"/>
</dbReference>
<dbReference type="NCBIfam" id="TIGR02348">
    <property type="entry name" value="GroEL"/>
    <property type="match status" value="1"/>
</dbReference>
<dbReference type="NCBIfam" id="NF000592">
    <property type="entry name" value="PRK00013.1"/>
    <property type="match status" value="1"/>
</dbReference>
<dbReference type="NCBIfam" id="NF009487">
    <property type="entry name" value="PRK12849.1"/>
    <property type="match status" value="1"/>
</dbReference>
<dbReference type="NCBIfam" id="NF009488">
    <property type="entry name" value="PRK12850.1"/>
    <property type="match status" value="1"/>
</dbReference>
<dbReference type="NCBIfam" id="NF009489">
    <property type="entry name" value="PRK12851.1"/>
    <property type="match status" value="1"/>
</dbReference>
<dbReference type="PANTHER" id="PTHR45633">
    <property type="entry name" value="60 KDA HEAT SHOCK PROTEIN, MITOCHONDRIAL"/>
    <property type="match status" value="1"/>
</dbReference>
<dbReference type="Pfam" id="PF00118">
    <property type="entry name" value="Cpn60_TCP1"/>
    <property type="match status" value="1"/>
</dbReference>
<dbReference type="PRINTS" id="PR00298">
    <property type="entry name" value="CHAPERONIN60"/>
</dbReference>
<dbReference type="SUPFAM" id="SSF52029">
    <property type="entry name" value="GroEL apical domain-like"/>
    <property type="match status" value="1"/>
</dbReference>
<dbReference type="SUPFAM" id="SSF48592">
    <property type="entry name" value="GroEL equatorial domain-like"/>
    <property type="match status" value="1"/>
</dbReference>
<dbReference type="SUPFAM" id="SSF54849">
    <property type="entry name" value="GroEL-intermediate domain like"/>
    <property type="match status" value="1"/>
</dbReference>
<dbReference type="PROSITE" id="PS00296">
    <property type="entry name" value="CHAPERONINS_CPN60"/>
    <property type="match status" value="1"/>
</dbReference>
<accession>O66202</accession>
<organism>
    <name type="scientific">Serratia rubidaea</name>
    <name type="common">Serratia marinorubra</name>
    <dbReference type="NCBI Taxonomy" id="61652"/>
    <lineage>
        <taxon>Bacteria</taxon>
        <taxon>Pseudomonadati</taxon>
        <taxon>Pseudomonadota</taxon>
        <taxon>Gammaproteobacteria</taxon>
        <taxon>Enterobacterales</taxon>
        <taxon>Yersiniaceae</taxon>
        <taxon>Serratia</taxon>
    </lineage>
</organism>
<sequence length="539" mass="56640">MAAKDVKFGNDARVKMLNGVNILADAVKVTLGPKGRNVVLDKSFGAPTITKDGVSVAREIELEDKFENMGAQMVKEVASKANDAAGDGTTTATVLAQAIVNEGLKAVAAGMNPMDLKRGIDKAVIAAVEELKKLSVPCSDSKAIAQVGTISANSDETVGKLIAEAMEKVGKEGVITVEEGTGLQDELDVVEGMQFDRGYLSPYFINKPETGSVELESPFILLADKKVSNIRELLPVLEAVAKAGKPLLIVAEDVEGEALATLVVNTMRGIVKVAAVKAPGFGDRRKAMLQDIATLTAGTVISEEIGMELEKATLEDLGQAKRVVINKDTTIIIDGIGDEATIQGRVAQIRQQIEEATSDYDREKLQERVAKLAGGVAVIKVGAATEVEMKEKKARVEDALHATRAAVEEGVVAGGGVALIRVASKIAELKGDNEDQNVGIKVALRAMEAPLRQIVINAGEEASVIANSVKAGEGSYGYNAYSEEYGDMIGMGILDPTKVTRSALQYAASVAGLMITTECMVTDLPKEDKADMGAAGMGG</sequence>
<feature type="chain" id="PRO_0000063526" description="Chaperonin GroEL">
    <location>
        <begin position="1"/>
        <end position="539" status="greater than"/>
    </location>
</feature>
<feature type="binding site" evidence="1">
    <location>
        <begin position="30"/>
        <end position="33"/>
    </location>
    <ligand>
        <name>ATP</name>
        <dbReference type="ChEBI" id="CHEBI:30616"/>
    </ligand>
</feature>
<feature type="binding site" evidence="1">
    <location>
        <position position="51"/>
    </location>
    <ligand>
        <name>ATP</name>
        <dbReference type="ChEBI" id="CHEBI:30616"/>
    </ligand>
</feature>
<feature type="binding site" evidence="1">
    <location>
        <begin position="87"/>
        <end position="91"/>
    </location>
    <ligand>
        <name>ATP</name>
        <dbReference type="ChEBI" id="CHEBI:30616"/>
    </ligand>
</feature>
<feature type="binding site" evidence="1">
    <location>
        <position position="415"/>
    </location>
    <ligand>
        <name>ATP</name>
        <dbReference type="ChEBI" id="CHEBI:30616"/>
    </ligand>
</feature>
<feature type="binding site" evidence="1">
    <location>
        <position position="495"/>
    </location>
    <ligand>
        <name>ATP</name>
        <dbReference type="ChEBI" id="CHEBI:30616"/>
    </ligand>
</feature>
<feature type="non-terminal residue">
    <location>
        <position position="539"/>
    </location>
</feature>
<reference key="1">
    <citation type="journal article" date="1997" name="J. Gen. Appl. Microbiol.">
        <title>Phylogenetical relationship based on groE genes among phenotypically related Enterobacter, Pantoea, Klebsiella, Serratia, and Erwinia species.</title>
        <authorList>
            <person name="Harada H."/>
            <person name="Ishikawa H."/>
        </authorList>
    </citation>
    <scope>NUCLEOTIDE SEQUENCE [GENOMIC DNA]</scope>
    <source>
        <strain>JCM 1240</strain>
    </source>
</reference>
<evidence type="ECO:0000255" key="1">
    <source>
        <dbReference type="HAMAP-Rule" id="MF_00600"/>
    </source>
</evidence>
<name>CH60_SERRU</name>
<protein>
    <recommendedName>
        <fullName evidence="1">Chaperonin GroEL</fullName>
        <ecNumber evidence="1">5.6.1.7</ecNumber>
    </recommendedName>
    <alternativeName>
        <fullName evidence="1">60 kDa chaperonin</fullName>
    </alternativeName>
    <alternativeName>
        <fullName evidence="1">Chaperonin-60</fullName>
        <shortName evidence="1">Cpn60</shortName>
    </alternativeName>
</protein>
<proteinExistence type="inferred from homology"/>